<keyword id="KW-0472">Membrane</keyword>
<keyword id="KW-0496">Mitochondrion</keyword>
<keyword id="KW-0999">Mitochondrion inner membrane</keyword>
<keyword id="KW-1185">Reference proteome</keyword>
<keyword id="KW-0677">Repeat</keyword>
<keyword id="KW-0812">Transmembrane</keyword>
<keyword id="KW-1133">Transmembrane helix</keyword>
<keyword id="KW-0813">Transport</keyword>
<sequence>MVGFRAGDVPPTATVKFIGAGTAACIADLFTFPLDTAKVRLQIQGENKASTNMGRGPVKYRGVFGTISTMVRVEGPRSLYSGLVAGLQRQMSFASVRIGLYDSVKQFYTKGSDHAGIGSRLMAGCTTGAMAVAVAQPTDVLKVRFQAQVSAGASKRYHSTMDAYRTIAKEEGFRGLWKGTGPNITRNAIVNCTELVTYDLIKDALLKSSLMTDDLPCHFTSAFGAGFCTTIIASPVDVVKTRYMNSAQGQYSSALNCAVAMLTKKGPKAFFKGFMPSFLRLGSWNVVMFVTYEQLKRAMMAARQNWHTPL</sequence>
<dbReference type="EMBL" id="AJ243250">
    <property type="protein sequence ID" value="CAB46268.1"/>
    <property type="molecule type" value="mRNA"/>
</dbReference>
<dbReference type="SMR" id="Q9W720"/>
<dbReference type="FunCoup" id="Q9W720">
    <property type="interactions" value="71"/>
</dbReference>
<dbReference type="STRING" id="7955.ENSDARP00000063358"/>
<dbReference type="PaxDb" id="7955-ENSDARP00000063358"/>
<dbReference type="AGR" id="ZFIN:ZDB-GENE-990708-8"/>
<dbReference type="ZFIN" id="ZDB-GENE-990708-8">
    <property type="gene designation" value="ucp2"/>
</dbReference>
<dbReference type="eggNOG" id="KOG0753">
    <property type="taxonomic scope" value="Eukaryota"/>
</dbReference>
<dbReference type="InParanoid" id="Q9W720"/>
<dbReference type="PhylomeDB" id="Q9W720"/>
<dbReference type="Reactome" id="R-DRE-167826">
    <property type="pathway name" value="The fatty acid cycling model"/>
</dbReference>
<dbReference type="PRO" id="PR:Q9W720"/>
<dbReference type="Proteomes" id="UP000000437">
    <property type="component" value="Unplaced"/>
</dbReference>
<dbReference type="GO" id="GO:0005743">
    <property type="term" value="C:mitochondrial inner membrane"/>
    <property type="evidence" value="ECO:0007669"/>
    <property type="project" value="UniProtKB-SubCell"/>
</dbReference>
<dbReference type="GO" id="GO:0017077">
    <property type="term" value="F:oxidative phosphorylation uncoupler activity"/>
    <property type="evidence" value="ECO:0000318"/>
    <property type="project" value="GO_Central"/>
</dbReference>
<dbReference type="GO" id="GO:1990845">
    <property type="term" value="P:adaptive thermogenesis"/>
    <property type="evidence" value="ECO:0000318"/>
    <property type="project" value="GO_Central"/>
</dbReference>
<dbReference type="GO" id="GO:1990542">
    <property type="term" value="P:mitochondrial transmembrane transport"/>
    <property type="evidence" value="ECO:0000318"/>
    <property type="project" value="GO_Central"/>
</dbReference>
<dbReference type="GO" id="GO:0009409">
    <property type="term" value="P:response to cold"/>
    <property type="evidence" value="ECO:0000318"/>
    <property type="project" value="GO_Central"/>
</dbReference>
<dbReference type="FunFam" id="1.50.40.10:FF:000008">
    <property type="entry name" value="Mitochondrial uncoupling protein 2"/>
    <property type="match status" value="1"/>
</dbReference>
<dbReference type="Gene3D" id="1.50.40.10">
    <property type="entry name" value="Mitochondrial carrier domain"/>
    <property type="match status" value="1"/>
</dbReference>
<dbReference type="InterPro" id="IPR002067">
    <property type="entry name" value="Mit_carrier"/>
</dbReference>
<dbReference type="InterPro" id="IPR050391">
    <property type="entry name" value="Mito_Metabolite_Transporter"/>
</dbReference>
<dbReference type="InterPro" id="IPR018108">
    <property type="entry name" value="Mitochondrial_sb/sol_carrier"/>
</dbReference>
<dbReference type="InterPro" id="IPR023395">
    <property type="entry name" value="Mt_carrier_dom_sf"/>
</dbReference>
<dbReference type="PANTHER" id="PTHR45618">
    <property type="entry name" value="MITOCHONDRIAL DICARBOXYLATE CARRIER-RELATED"/>
    <property type="match status" value="1"/>
</dbReference>
<dbReference type="Pfam" id="PF00153">
    <property type="entry name" value="Mito_carr"/>
    <property type="match status" value="3"/>
</dbReference>
<dbReference type="PRINTS" id="PR00784">
    <property type="entry name" value="MTUNCOUPLING"/>
</dbReference>
<dbReference type="SUPFAM" id="SSF103506">
    <property type="entry name" value="Mitochondrial carrier"/>
    <property type="match status" value="1"/>
</dbReference>
<dbReference type="PROSITE" id="PS50920">
    <property type="entry name" value="SOLCAR"/>
    <property type="match status" value="3"/>
</dbReference>
<organism>
    <name type="scientific">Danio rerio</name>
    <name type="common">Zebrafish</name>
    <name type="synonym">Brachydanio rerio</name>
    <dbReference type="NCBI Taxonomy" id="7955"/>
    <lineage>
        <taxon>Eukaryota</taxon>
        <taxon>Metazoa</taxon>
        <taxon>Chordata</taxon>
        <taxon>Craniata</taxon>
        <taxon>Vertebrata</taxon>
        <taxon>Euteleostomi</taxon>
        <taxon>Actinopterygii</taxon>
        <taxon>Neopterygii</taxon>
        <taxon>Teleostei</taxon>
        <taxon>Ostariophysi</taxon>
        <taxon>Cypriniformes</taxon>
        <taxon>Danionidae</taxon>
        <taxon>Danioninae</taxon>
        <taxon>Danio</taxon>
    </lineage>
</organism>
<gene>
    <name type="primary">ucp2</name>
    <name type="synonym">slc25a8</name>
</gene>
<proteinExistence type="evidence at transcript level"/>
<protein>
    <recommendedName>
        <fullName>Dicarboxylate carrier UCP2</fullName>
    </recommendedName>
    <alternativeName>
        <fullName>Mitochondrial uncoupling protein 2</fullName>
        <shortName>UCP 2</shortName>
    </alternativeName>
    <alternativeName>
        <fullName>Solute carrier family 25 member 8</fullName>
    </alternativeName>
</protein>
<feature type="chain" id="PRO_0000090668" description="Dicarboxylate carrier UCP2">
    <location>
        <begin position="1"/>
        <end position="310"/>
    </location>
</feature>
<feature type="topological domain" description="Mitochondrial intermembrane" evidence="5">
    <location>
        <begin position="1"/>
        <end position="10"/>
    </location>
</feature>
<feature type="transmembrane region" description="Helical; Name=1" evidence="4">
    <location>
        <begin position="11"/>
        <end position="32"/>
    </location>
</feature>
<feature type="topological domain" description="Mitochondrial matrix" evidence="5">
    <location>
        <begin position="33"/>
        <end position="78"/>
    </location>
</feature>
<feature type="transmembrane region" description="Helical; Name=2" evidence="4">
    <location>
        <begin position="79"/>
        <end position="101"/>
    </location>
</feature>
<feature type="topological domain" description="Mitochondrial intermembrane" evidence="5">
    <location>
        <begin position="102"/>
        <end position="120"/>
    </location>
</feature>
<feature type="transmembrane region" description="Helical; Name=3" evidence="4">
    <location>
        <begin position="121"/>
        <end position="137"/>
    </location>
</feature>
<feature type="topological domain" description="Mitochondrial matrix" evidence="5">
    <location>
        <begin position="138"/>
        <end position="181"/>
    </location>
</feature>
<feature type="transmembrane region" description="Helical; Name=4" evidence="4">
    <location>
        <begin position="182"/>
        <end position="198"/>
    </location>
</feature>
<feature type="topological domain" description="Mitochondrial intermembrane" evidence="5">
    <location>
        <begin position="199"/>
        <end position="215"/>
    </location>
</feature>
<feature type="transmembrane region" description="Helical; Name=5" evidence="4">
    <location>
        <begin position="216"/>
        <end position="235"/>
    </location>
</feature>
<feature type="topological domain" description="Mitochondrial matrix" evidence="5">
    <location>
        <begin position="236"/>
        <end position="269"/>
    </location>
</feature>
<feature type="transmembrane region" description="Helical; Name=6" evidence="4">
    <location>
        <begin position="270"/>
        <end position="292"/>
    </location>
</feature>
<feature type="topological domain" description="Mitochondrial intermembrane" evidence="5">
    <location>
        <begin position="293"/>
        <end position="310"/>
    </location>
</feature>
<feature type="repeat" description="Solcar 1">
    <location>
        <begin position="11"/>
        <end position="107"/>
    </location>
</feature>
<feature type="repeat" description="Solcar 2">
    <location>
        <begin position="115"/>
        <end position="204"/>
    </location>
</feature>
<feature type="repeat" description="Solcar 3">
    <location>
        <begin position="213"/>
        <end position="298"/>
    </location>
</feature>
<feature type="region of interest" description="Purine nucleotide binding" evidence="1">
    <location>
        <begin position="277"/>
        <end position="299"/>
    </location>
</feature>
<reference key="1">
    <citation type="submission" date="1999-06" db="EMBL/GenBank/DDBJ databases">
        <title>Uncoupling protein 1 homologues and thermogenesis? UCPs from cold-blooded vertebrates.</title>
        <authorList>
            <person name="Stuart J.A."/>
            <person name="Harper J.A."/>
            <person name="Brindle K.M."/>
            <person name="Brand M.D."/>
        </authorList>
    </citation>
    <scope>NUCLEOTIDE SEQUENCE [MRNA]</scope>
</reference>
<comment type="function">
    <text evidence="1">UCP are mitochondrial transporter proteins that create proton leaks across the inner mitochondrial membrane, thus uncoupling oxidative phosphorylation from ATP synthesis. As a result, energy is dissipated in the form of heat (By similarity).</text>
</comment>
<comment type="function">
    <text evidence="2">Antiporter that exports dicarboxylate intermediates of the Krebs cycle in exchange for phosphate plus a proton across the inner membrane of mitochondria, a process driven by mitochondrial motive force with an overall impact on glycolysis, glutaminolysis and glutathione-dependent redox balance. Continuous export of oxaloacetate and related four-carbon dicarboxylates from mitochondrial matrix into the cytosol negatively regulates the oxidation of acetyl-CoA substrates via the Krebs cycle, lowering the ATP/ADP ratio and reactive oxygen species (ROS) production. May mediate inducible proton entry into the mitochondrial matrix affecting ATP turnover as a protection mechanism against oxidative stress. The proton currents are most likely associated with fatty acid flipping across the inner membrane of mitochondria in a metabolic process regulated by free fatty acids and purine nucleotides.</text>
</comment>
<comment type="catalytic activity">
    <reaction evidence="2">
        <text>L-aspartate(out) + phosphate(in) + H(+)(in) = L-aspartate(in) + phosphate(out) + H(+)(out)</text>
        <dbReference type="Rhea" id="RHEA:73307"/>
        <dbReference type="ChEBI" id="CHEBI:15378"/>
        <dbReference type="ChEBI" id="CHEBI:29991"/>
        <dbReference type="ChEBI" id="CHEBI:43474"/>
    </reaction>
</comment>
<comment type="catalytic activity">
    <reaction evidence="2">
        <text>oxaloacetate(out) + phosphate(in) + H(+)(in) = oxaloacetate(in) + phosphate(out) + H(+)(out)</text>
        <dbReference type="Rhea" id="RHEA:73303"/>
        <dbReference type="ChEBI" id="CHEBI:15378"/>
        <dbReference type="ChEBI" id="CHEBI:16452"/>
        <dbReference type="ChEBI" id="CHEBI:43474"/>
    </reaction>
</comment>
<comment type="catalytic activity">
    <reaction evidence="2">
        <text>(S)-malate(out) + phosphate(in) + H(+)(in) = (S)-malate(in) + phosphate(out) + H(+)(out)</text>
        <dbReference type="Rhea" id="RHEA:73299"/>
        <dbReference type="ChEBI" id="CHEBI:15378"/>
        <dbReference type="ChEBI" id="CHEBI:15589"/>
        <dbReference type="ChEBI" id="CHEBI:43474"/>
    </reaction>
</comment>
<comment type="catalytic activity">
    <reaction evidence="2">
        <text>malonate(out) + phosphate(in) + H(+)(in) = malonate(in) + phosphate(out) + H(+)(out)</text>
        <dbReference type="Rhea" id="RHEA:73387"/>
        <dbReference type="ChEBI" id="CHEBI:15378"/>
        <dbReference type="ChEBI" id="CHEBI:15792"/>
        <dbReference type="ChEBI" id="CHEBI:43474"/>
    </reaction>
</comment>
<comment type="catalytic activity">
    <reaction evidence="2">
        <text>sulfate(out) + phosphate(in) + H(+)(in) = sulfate(in) + phosphate(out) + H(+)(out)</text>
        <dbReference type="Rhea" id="RHEA:73391"/>
        <dbReference type="ChEBI" id="CHEBI:15378"/>
        <dbReference type="ChEBI" id="CHEBI:16189"/>
        <dbReference type="ChEBI" id="CHEBI:43474"/>
    </reaction>
</comment>
<comment type="catalytic activity">
    <reaction evidence="2">
        <text>(S)-malate(out) = (S)-malate(in)</text>
        <dbReference type="Rhea" id="RHEA:74555"/>
        <dbReference type="ChEBI" id="CHEBI:15589"/>
    </reaction>
</comment>
<comment type="catalytic activity">
    <reaction evidence="2">
        <text>L-aspartate(out) = L-aspartate(in)</text>
        <dbReference type="Rhea" id="RHEA:66332"/>
        <dbReference type="ChEBI" id="CHEBI:29991"/>
    </reaction>
</comment>
<comment type="catalytic activity">
    <reaction evidence="2">
        <text>phosphate(in) = phosphate(out)</text>
        <dbReference type="Rhea" id="RHEA:32823"/>
        <dbReference type="ChEBI" id="CHEBI:43474"/>
    </reaction>
</comment>
<comment type="catalytic activity">
    <reaction evidence="2">
        <text>chloride(in) = chloride(out)</text>
        <dbReference type="Rhea" id="RHEA:29823"/>
        <dbReference type="ChEBI" id="CHEBI:17996"/>
    </reaction>
</comment>
<comment type="catalytic activity">
    <reaction evidence="2">
        <text>H(+)(in) = H(+)(out)</text>
        <dbReference type="Rhea" id="RHEA:34979"/>
        <dbReference type="ChEBI" id="CHEBI:15378"/>
    </reaction>
</comment>
<comment type="catalytic activity">
    <reaction evidence="3">
        <text>a long-chain fatty acid(out) = a long-chain fatty acid(in)</text>
        <dbReference type="Rhea" id="RHEA:39283"/>
        <dbReference type="ChEBI" id="CHEBI:57560"/>
    </reaction>
</comment>
<comment type="subunit">
    <text evidence="2">Homotetramer. Adopts an asymmetrical dimer of dimers functional form.</text>
</comment>
<comment type="subcellular location">
    <subcellularLocation>
        <location evidence="3">Mitochondrion inner membrane</location>
        <topology evidence="4">Multi-pass membrane protein</topology>
    </subcellularLocation>
</comment>
<comment type="similarity">
    <text evidence="5">Belongs to the mitochondrial carrier (TC 2.A.29) family.</text>
</comment>
<accession>Q9W720</accession>
<evidence type="ECO:0000250" key="1"/>
<evidence type="ECO:0000250" key="2">
    <source>
        <dbReference type="UniProtKB" id="P55851"/>
    </source>
</evidence>
<evidence type="ECO:0000250" key="3">
    <source>
        <dbReference type="UniProtKB" id="P70406"/>
    </source>
</evidence>
<evidence type="ECO:0000255" key="4"/>
<evidence type="ECO:0000305" key="5"/>
<name>UCP2_DANRE</name>